<feature type="chain" id="PRO_1000184798" description="ATP synthase subunit delta">
    <location>
        <begin position="1"/>
        <end position="179"/>
    </location>
</feature>
<comment type="function">
    <text evidence="1">F(1)F(0) ATP synthase produces ATP from ADP in the presence of a proton or sodium gradient. F-type ATPases consist of two structural domains, F(1) containing the extramembraneous catalytic core and F(0) containing the membrane proton channel, linked together by a central stalk and a peripheral stalk. During catalysis, ATP synthesis in the catalytic domain of F(1) is coupled via a rotary mechanism of the central stalk subunits to proton translocation.</text>
</comment>
<comment type="function">
    <text evidence="1">This protein is part of the stalk that links CF(0) to CF(1). It either transmits conformational changes from CF(0) to CF(1) or is implicated in proton conduction.</text>
</comment>
<comment type="subunit">
    <text evidence="1">F-type ATPases have 2 components, F(1) - the catalytic core - and F(0) - the membrane proton channel. F(1) has five subunits: alpha(3), beta(3), gamma(1), delta(1), epsilon(1). F(0) has three main subunits: a(1), b(2) and c(10-14). The alpha and beta chains form an alternating ring which encloses part of the gamma chain. F(1) is attached to F(0) by a central stalk formed by the gamma and epsilon chains, while a peripheral stalk is formed by the delta and b chains.</text>
</comment>
<comment type="subcellular location">
    <subcellularLocation>
        <location evidence="1">Cell membrane</location>
        <topology evidence="1">Peripheral membrane protein</topology>
    </subcellularLocation>
</comment>
<comment type="similarity">
    <text evidence="1">Belongs to the ATPase delta chain family.</text>
</comment>
<keyword id="KW-0066">ATP synthesis</keyword>
<keyword id="KW-1003">Cell membrane</keyword>
<keyword id="KW-0139">CF(1)</keyword>
<keyword id="KW-0375">Hydrogen ion transport</keyword>
<keyword id="KW-0406">Ion transport</keyword>
<keyword id="KW-0472">Membrane</keyword>
<keyword id="KW-0813">Transport</keyword>
<gene>
    <name evidence="1" type="primary">atpH</name>
    <name type="ordered locus">SAUSA300_2061</name>
</gene>
<organism>
    <name type="scientific">Staphylococcus aureus (strain USA300)</name>
    <dbReference type="NCBI Taxonomy" id="367830"/>
    <lineage>
        <taxon>Bacteria</taxon>
        <taxon>Bacillati</taxon>
        <taxon>Bacillota</taxon>
        <taxon>Bacilli</taxon>
        <taxon>Bacillales</taxon>
        <taxon>Staphylococcaceae</taxon>
        <taxon>Staphylococcus</taxon>
    </lineage>
</organism>
<evidence type="ECO:0000255" key="1">
    <source>
        <dbReference type="HAMAP-Rule" id="MF_01416"/>
    </source>
</evidence>
<protein>
    <recommendedName>
        <fullName evidence="1">ATP synthase subunit delta</fullName>
    </recommendedName>
    <alternativeName>
        <fullName evidence="1">ATP synthase F(1) sector subunit delta</fullName>
    </alternativeName>
    <alternativeName>
        <fullName evidence="1">F-type ATPase subunit delta</fullName>
        <shortName evidence="1">F-ATPase subunit delta</shortName>
    </alternativeName>
</protein>
<reference key="1">
    <citation type="journal article" date="2006" name="Lancet">
        <title>Complete genome sequence of USA300, an epidemic clone of community-acquired meticillin-resistant Staphylococcus aureus.</title>
        <authorList>
            <person name="Diep B.A."/>
            <person name="Gill S.R."/>
            <person name="Chang R.F."/>
            <person name="Phan T.H."/>
            <person name="Chen J.H."/>
            <person name="Davidson M.G."/>
            <person name="Lin F."/>
            <person name="Lin J."/>
            <person name="Carleton H.A."/>
            <person name="Mongodin E.F."/>
            <person name="Sensabaugh G.F."/>
            <person name="Perdreau-Remington F."/>
        </authorList>
    </citation>
    <scope>NUCLEOTIDE SEQUENCE [LARGE SCALE GENOMIC DNA]</scope>
    <source>
        <strain>USA300</strain>
    </source>
</reference>
<name>ATPD_STAA3</name>
<proteinExistence type="inferred from homology"/>
<dbReference type="EMBL" id="CP000255">
    <property type="protein sequence ID" value="ABD21062.1"/>
    <property type="molecule type" value="Genomic_DNA"/>
</dbReference>
<dbReference type="RefSeq" id="WP_000241351.1">
    <property type="nucleotide sequence ID" value="NZ_CP027476.1"/>
</dbReference>
<dbReference type="SMR" id="Q2FF21"/>
<dbReference type="KEGG" id="saa:SAUSA300_2061"/>
<dbReference type="HOGENOM" id="CLU_085114_4_1_9"/>
<dbReference type="OMA" id="MVDNIQD"/>
<dbReference type="Proteomes" id="UP000001939">
    <property type="component" value="Chromosome"/>
</dbReference>
<dbReference type="GO" id="GO:0005886">
    <property type="term" value="C:plasma membrane"/>
    <property type="evidence" value="ECO:0007669"/>
    <property type="project" value="UniProtKB-SubCell"/>
</dbReference>
<dbReference type="GO" id="GO:0045259">
    <property type="term" value="C:proton-transporting ATP synthase complex"/>
    <property type="evidence" value="ECO:0007669"/>
    <property type="project" value="UniProtKB-KW"/>
</dbReference>
<dbReference type="GO" id="GO:0046933">
    <property type="term" value="F:proton-transporting ATP synthase activity, rotational mechanism"/>
    <property type="evidence" value="ECO:0007669"/>
    <property type="project" value="UniProtKB-UniRule"/>
</dbReference>
<dbReference type="Gene3D" id="1.10.520.20">
    <property type="entry name" value="N-terminal domain of the delta subunit of the F1F0-ATP synthase"/>
    <property type="match status" value="1"/>
</dbReference>
<dbReference type="HAMAP" id="MF_01416">
    <property type="entry name" value="ATP_synth_delta_bact"/>
    <property type="match status" value="1"/>
</dbReference>
<dbReference type="InterPro" id="IPR026015">
    <property type="entry name" value="ATP_synth_OSCP/delta_N_sf"/>
</dbReference>
<dbReference type="InterPro" id="IPR020781">
    <property type="entry name" value="ATPase_OSCP/d_CS"/>
</dbReference>
<dbReference type="InterPro" id="IPR000711">
    <property type="entry name" value="ATPase_OSCP/dsu"/>
</dbReference>
<dbReference type="NCBIfam" id="TIGR01145">
    <property type="entry name" value="ATP_synt_delta"/>
    <property type="match status" value="1"/>
</dbReference>
<dbReference type="NCBIfam" id="NF004399">
    <property type="entry name" value="PRK05758.1-1"/>
    <property type="match status" value="1"/>
</dbReference>
<dbReference type="PANTHER" id="PTHR11910">
    <property type="entry name" value="ATP SYNTHASE DELTA CHAIN"/>
    <property type="match status" value="1"/>
</dbReference>
<dbReference type="Pfam" id="PF00213">
    <property type="entry name" value="OSCP"/>
    <property type="match status" value="1"/>
</dbReference>
<dbReference type="PRINTS" id="PR00125">
    <property type="entry name" value="ATPASEDELTA"/>
</dbReference>
<dbReference type="SUPFAM" id="SSF47928">
    <property type="entry name" value="N-terminal domain of the delta subunit of the F1F0-ATP synthase"/>
    <property type="match status" value="1"/>
</dbReference>
<dbReference type="PROSITE" id="PS00389">
    <property type="entry name" value="ATPASE_DELTA"/>
    <property type="match status" value="1"/>
</dbReference>
<sequence length="179" mass="20498">MVKVANKYAKALFDVSLDTNNLETINEELTVINEAVKDKIEQLRMVDSNPTQTAEQRRELINGVFTDINPYIKNMMYVLADNRHISLIADVFKAFQSLYNGHYNQDFATIESTYELSQEELDKIVKLVTQQTKLSKVIVDTKINPDLIGGFRVKVGTTVLDGSVRNDLVQLQRKFRRVN</sequence>
<accession>Q2FF21</accession>